<sequence>MSGKCDNCDCADSTQCVKKGNSYDLVIVETENRSMDTVFVDAPAAEHDGKCKCGTGCSCVSCTCGH</sequence>
<organism>
    <name type="scientific">Malus domestica</name>
    <name type="common">Apple</name>
    <name type="synonym">Pyrus malus</name>
    <dbReference type="NCBI Taxonomy" id="3750"/>
    <lineage>
        <taxon>Eukaryota</taxon>
        <taxon>Viridiplantae</taxon>
        <taxon>Streptophyta</taxon>
        <taxon>Embryophyta</taxon>
        <taxon>Tracheophyta</taxon>
        <taxon>Spermatophyta</taxon>
        <taxon>Magnoliopsida</taxon>
        <taxon>eudicotyledons</taxon>
        <taxon>Gunneridae</taxon>
        <taxon>Pentapetalae</taxon>
        <taxon>rosids</taxon>
        <taxon>fabids</taxon>
        <taxon>Rosales</taxon>
        <taxon>Rosaceae</taxon>
        <taxon>Amygdaloideae</taxon>
        <taxon>Maleae</taxon>
        <taxon>Malus</taxon>
    </lineage>
</organism>
<feature type="chain" id="PRO_0000197415" description="Metallothionein-like protein type 3">
    <location>
        <begin position="1"/>
        <end position="66"/>
    </location>
</feature>
<gene>
    <name type="primary">MT2</name>
</gene>
<accession>O24059</accession>
<dbReference type="EMBL" id="U61974">
    <property type="protein sequence ID" value="AAC23698.1"/>
    <property type="molecule type" value="mRNA"/>
</dbReference>
<dbReference type="PIR" id="T17015">
    <property type="entry name" value="T17015"/>
</dbReference>
<dbReference type="EnsemblPlants" id="mRNA:MD03G0188300">
    <property type="protein sequence ID" value="mRNA:MD03G0188300"/>
    <property type="gene ID" value="MD03G0188300"/>
</dbReference>
<dbReference type="Gramene" id="mRNA:MD03G0188300">
    <property type="protein sequence ID" value="mRNA:MD03G0188300"/>
    <property type="gene ID" value="MD03G0188300"/>
</dbReference>
<dbReference type="GO" id="GO:0005507">
    <property type="term" value="F:copper ion binding"/>
    <property type="evidence" value="ECO:0007669"/>
    <property type="project" value="InterPro"/>
</dbReference>
<dbReference type="GO" id="GO:0008270">
    <property type="term" value="F:zinc ion binding"/>
    <property type="evidence" value="ECO:0007669"/>
    <property type="project" value="InterPro"/>
</dbReference>
<dbReference type="GO" id="GO:1990748">
    <property type="term" value="P:cellular detoxification"/>
    <property type="evidence" value="ECO:0000250"/>
    <property type="project" value="UniProtKB"/>
</dbReference>
<dbReference type="GO" id="GO:0006878">
    <property type="term" value="P:intracellular copper ion homeostasis"/>
    <property type="evidence" value="ECO:0007669"/>
    <property type="project" value="InterPro"/>
</dbReference>
<dbReference type="InterPro" id="IPR044671">
    <property type="entry name" value="MT3"/>
</dbReference>
<dbReference type="PANTHER" id="PTHR33357">
    <property type="entry name" value="METALLOTHIONEIN-LIKE PROTEIN 3"/>
    <property type="match status" value="1"/>
</dbReference>
<dbReference type="PANTHER" id="PTHR33357:SF3">
    <property type="entry name" value="METALLOTHIONEIN-LIKE PROTEIN 3"/>
    <property type="match status" value="1"/>
</dbReference>
<comment type="function">
    <text>Metallothioneins have a high content of cysteine residues that bind various heavy metals.</text>
</comment>
<comment type="similarity">
    <text evidence="1">Belongs to the metallothionein superfamily. Type 15 family.</text>
</comment>
<keyword id="KW-0479">Metal-binding</keyword>
<keyword id="KW-0480">Metal-thiolate cluster</keyword>
<proteinExistence type="inferred from homology"/>
<protein>
    <recommendedName>
        <fullName>Metallothionein-like protein type 3</fullName>
        <shortName>MT-3</shortName>
    </recommendedName>
</protein>
<name>MT3_MALDO</name>
<reference key="1">
    <citation type="journal article" date="1997" name="Physiol. Plantarum">
        <title>Up-regulation of two cDNA clones encoding metallothionein-like proteins in apple fruit during cool storage.</title>
        <authorList>
            <person name="Reid S.J."/>
            <person name="Ross G.S."/>
        </authorList>
    </citation>
    <scope>NUCLEOTIDE SEQUENCE [MRNA]</scope>
</reference>
<evidence type="ECO:0000305" key="1"/>